<gene>
    <name evidence="1" type="primary">yhaM</name>
    <name type="ordered locus">BPUM_0936</name>
</gene>
<accession>A8FBK3</accession>
<reference key="1">
    <citation type="journal article" date="2007" name="PLoS ONE">
        <title>Paradoxical DNA repair and peroxide resistance gene conservation in Bacillus pumilus SAFR-032.</title>
        <authorList>
            <person name="Gioia J."/>
            <person name="Yerrapragada S."/>
            <person name="Qin X."/>
            <person name="Jiang H."/>
            <person name="Igboeli O.C."/>
            <person name="Muzny D."/>
            <person name="Dugan-Rocha S."/>
            <person name="Ding Y."/>
            <person name="Hawes A."/>
            <person name="Liu W."/>
            <person name="Perez L."/>
            <person name="Kovar C."/>
            <person name="Dinh H."/>
            <person name="Lee S."/>
            <person name="Nazareth L."/>
            <person name="Blyth P."/>
            <person name="Holder M."/>
            <person name="Buhay C."/>
            <person name="Tirumalai M.R."/>
            <person name="Liu Y."/>
            <person name="Dasgupta I."/>
            <person name="Bokhetache L."/>
            <person name="Fujita M."/>
            <person name="Karouia F."/>
            <person name="Eswara Moorthy P."/>
            <person name="Siefert J."/>
            <person name="Uzman A."/>
            <person name="Buzumbo P."/>
            <person name="Verma A."/>
            <person name="Zwiya H."/>
            <person name="McWilliams B.D."/>
            <person name="Olowu A."/>
            <person name="Clinkenbeard K.D."/>
            <person name="Newcombe D."/>
            <person name="Golebiewski L."/>
            <person name="Petrosino J.F."/>
            <person name="Nicholson W.L."/>
            <person name="Fox G.E."/>
            <person name="Venkateswaran K."/>
            <person name="Highlander S.K."/>
            <person name="Weinstock G.M."/>
        </authorList>
    </citation>
    <scope>NUCLEOTIDE SEQUENCE [LARGE SCALE GENOMIC DNA]</scope>
    <source>
        <strain>SAFR-032</strain>
    </source>
</reference>
<organism>
    <name type="scientific">Bacillus pumilus (strain SAFR-032)</name>
    <dbReference type="NCBI Taxonomy" id="315750"/>
    <lineage>
        <taxon>Bacteria</taxon>
        <taxon>Bacillati</taxon>
        <taxon>Bacillota</taxon>
        <taxon>Bacilli</taxon>
        <taxon>Bacillales</taxon>
        <taxon>Bacillaceae</taxon>
        <taxon>Bacillus</taxon>
    </lineage>
</organism>
<sequence length="314" mass="35693">MAKGIMTYDVGEQVDLHLLIKSSTKGIASNGKPFLTLILQDQSGDIEAKLWDAKQNDEQTYAAQTIVKVVGDIHHYRGRNQLKLRNIRPVAENEQIRIDDFLETAPIPKHDMMDTIMQYIFDMKNPNIQRVTRHLLKKYGQEFADYPAATKNHHEFVSGLAYHVVSMLHLAKSIVDLYPSLDRDLLYSGIILHDLGKVKELSGPVSTTYTVEGNLIGHISIMVTEIAKAAEELGIDSEEILILQHLVLSHHGKGEWGSPKPPMVKEAEILHYIDNLDAKMNMMDRALEHVKPGEYTERIFALENRSFYKPTFHE</sequence>
<name>YHAM_BACP2</name>
<evidence type="ECO:0000255" key="1">
    <source>
        <dbReference type="HAMAP-Rule" id="MF_01427"/>
    </source>
</evidence>
<evidence type="ECO:0000255" key="2">
    <source>
        <dbReference type="PROSITE-ProRule" id="PRU01175"/>
    </source>
</evidence>
<comment type="function">
    <text evidence="1">Shows a 3'-5' exoribonuclease activity.</text>
</comment>
<comment type="similarity">
    <text evidence="1">Belongs to the YhaM family.</text>
</comment>
<keyword id="KW-0269">Exonuclease</keyword>
<keyword id="KW-0378">Hydrolase</keyword>
<keyword id="KW-0540">Nuclease</keyword>
<proteinExistence type="inferred from homology"/>
<feature type="chain" id="PRO_1000068518" description="3'-5' exoribonuclease YhaM">
    <location>
        <begin position="1"/>
        <end position="314"/>
    </location>
</feature>
<feature type="domain" description="HD" evidence="2">
    <location>
        <begin position="163"/>
        <end position="279"/>
    </location>
</feature>
<dbReference type="EC" id="3.1.-.-" evidence="1"/>
<dbReference type="EMBL" id="CP000813">
    <property type="protein sequence ID" value="ABV61620.1"/>
    <property type="molecule type" value="Genomic_DNA"/>
</dbReference>
<dbReference type="RefSeq" id="WP_003211952.1">
    <property type="nucleotide sequence ID" value="NZ_VEIS01000007.1"/>
</dbReference>
<dbReference type="SMR" id="A8FBK3"/>
<dbReference type="STRING" id="315750.BPUM_0936"/>
<dbReference type="GeneID" id="5620201"/>
<dbReference type="KEGG" id="bpu:BPUM_0936"/>
<dbReference type="eggNOG" id="COG3481">
    <property type="taxonomic scope" value="Bacteria"/>
</dbReference>
<dbReference type="HOGENOM" id="CLU_056349_2_0_9"/>
<dbReference type="OrthoDB" id="9778453at2"/>
<dbReference type="Proteomes" id="UP000001355">
    <property type="component" value="Chromosome"/>
</dbReference>
<dbReference type="GO" id="GO:0000175">
    <property type="term" value="F:3'-5'-RNA exonuclease activity"/>
    <property type="evidence" value="ECO:0007669"/>
    <property type="project" value="UniProtKB-UniRule"/>
</dbReference>
<dbReference type="GO" id="GO:0031125">
    <property type="term" value="P:rRNA 3'-end processing"/>
    <property type="evidence" value="ECO:0007669"/>
    <property type="project" value="TreeGrafter"/>
</dbReference>
<dbReference type="CDD" id="cd00077">
    <property type="entry name" value="HDc"/>
    <property type="match status" value="1"/>
</dbReference>
<dbReference type="CDD" id="cd04492">
    <property type="entry name" value="YhaM_OBF_like"/>
    <property type="match status" value="1"/>
</dbReference>
<dbReference type="FunFam" id="1.10.3210.10:FF:000008">
    <property type="entry name" value="3'-5' exoribonuclease YhaM"/>
    <property type="match status" value="1"/>
</dbReference>
<dbReference type="Gene3D" id="1.10.3210.10">
    <property type="entry name" value="Hypothetical protein af1432"/>
    <property type="match status" value="1"/>
</dbReference>
<dbReference type="Gene3D" id="2.40.50.140">
    <property type="entry name" value="Nucleic acid-binding proteins"/>
    <property type="match status" value="1"/>
</dbReference>
<dbReference type="HAMAP" id="MF_01427">
    <property type="entry name" value="3_5_Exoribonuc_YhaM"/>
    <property type="match status" value="1"/>
</dbReference>
<dbReference type="InterPro" id="IPR020873">
    <property type="entry name" value="3'-5'_exoribonuclease_YhaM"/>
</dbReference>
<dbReference type="InterPro" id="IPR003607">
    <property type="entry name" value="HD/PDEase_dom"/>
</dbReference>
<dbReference type="InterPro" id="IPR006674">
    <property type="entry name" value="HD_domain"/>
</dbReference>
<dbReference type="InterPro" id="IPR012340">
    <property type="entry name" value="NA-bd_OB-fold"/>
</dbReference>
<dbReference type="InterPro" id="IPR050798">
    <property type="entry name" value="YhaM_exoribonuc/phosphodiest"/>
</dbReference>
<dbReference type="NCBIfam" id="NF010007">
    <property type="entry name" value="PRK13480.1"/>
    <property type="match status" value="1"/>
</dbReference>
<dbReference type="PANTHER" id="PTHR37294">
    <property type="entry name" value="3'-5' EXORIBONUCLEASE YHAM"/>
    <property type="match status" value="1"/>
</dbReference>
<dbReference type="PANTHER" id="PTHR37294:SF1">
    <property type="entry name" value="3'-5' EXORIBONUCLEASE YHAM"/>
    <property type="match status" value="1"/>
</dbReference>
<dbReference type="Pfam" id="PF01966">
    <property type="entry name" value="HD"/>
    <property type="match status" value="1"/>
</dbReference>
<dbReference type="SMART" id="SM00471">
    <property type="entry name" value="HDc"/>
    <property type="match status" value="1"/>
</dbReference>
<dbReference type="SUPFAM" id="SSF109604">
    <property type="entry name" value="HD-domain/PDEase-like"/>
    <property type="match status" value="1"/>
</dbReference>
<dbReference type="PROSITE" id="PS51831">
    <property type="entry name" value="HD"/>
    <property type="match status" value="1"/>
</dbReference>
<protein>
    <recommendedName>
        <fullName evidence="1">3'-5' exoribonuclease YhaM</fullName>
        <ecNumber evidence="1">3.1.-.-</ecNumber>
    </recommendedName>
</protein>